<reference key="1">
    <citation type="journal article" date="2006" name="Lancet">
        <title>Complete genome sequence of USA300, an epidemic clone of community-acquired meticillin-resistant Staphylococcus aureus.</title>
        <authorList>
            <person name="Diep B.A."/>
            <person name="Gill S.R."/>
            <person name="Chang R.F."/>
            <person name="Phan T.H."/>
            <person name="Chen J.H."/>
            <person name="Davidson M.G."/>
            <person name="Lin F."/>
            <person name="Lin J."/>
            <person name="Carleton H.A."/>
            <person name="Mongodin E.F."/>
            <person name="Sensabaugh G.F."/>
            <person name="Perdreau-Remington F."/>
        </authorList>
    </citation>
    <scope>NUCLEOTIDE SEQUENCE [LARGE SCALE GENOMIC DNA]</scope>
    <source>
        <strain>USA300</strain>
    </source>
</reference>
<proteinExistence type="inferred from homology"/>
<feature type="chain" id="PRO_0000304135" description="Putative formate dehydrogenase SAUSA300_2258">
    <location>
        <begin position="1"/>
        <end position="984"/>
    </location>
</feature>
<feature type="domain" description="2Fe-2S ferredoxin-type" evidence="2">
    <location>
        <begin position="3"/>
        <end position="79"/>
    </location>
</feature>
<feature type="domain" description="4Fe-4S His(Cys)3-ligated-type" evidence="5">
    <location>
        <begin position="79"/>
        <end position="119"/>
    </location>
</feature>
<feature type="domain" description="4Fe-4S ferredoxin-type 1" evidence="3">
    <location>
        <begin position="138"/>
        <end position="165"/>
    </location>
</feature>
<feature type="domain" description="4Fe-4S ferredoxin-type 2" evidence="3">
    <location>
        <begin position="181"/>
        <end position="211"/>
    </location>
</feature>
<feature type="domain" description="4Fe-4S Mo/W bis-MGD-type" evidence="4">
    <location>
        <begin position="257"/>
        <end position="313"/>
    </location>
</feature>
<feature type="region of interest" description="Formate dehydrogenase">
    <location>
        <begin position="252"/>
        <end position="984"/>
    </location>
</feature>
<feature type="binding site" evidence="1">
    <location>
        <position position="37"/>
    </location>
    <ligand>
        <name>[2Fe-2S] cluster</name>
        <dbReference type="ChEBI" id="CHEBI:190135"/>
    </ligand>
</feature>
<feature type="binding site" evidence="1">
    <location>
        <position position="48"/>
    </location>
    <ligand>
        <name>[2Fe-2S] cluster</name>
        <dbReference type="ChEBI" id="CHEBI:190135"/>
    </ligand>
</feature>
<feature type="binding site" evidence="1">
    <location>
        <position position="51"/>
    </location>
    <ligand>
        <name>[2Fe-2S] cluster</name>
        <dbReference type="ChEBI" id="CHEBI:190135"/>
    </ligand>
</feature>
<feature type="binding site" evidence="1">
    <location>
        <position position="63"/>
    </location>
    <ligand>
        <name>[2Fe-2S] cluster</name>
        <dbReference type="ChEBI" id="CHEBI:190135"/>
    </ligand>
</feature>
<feature type="binding site" evidence="5">
    <location>
        <position position="95"/>
    </location>
    <ligand>
        <name>[4Fe-4S] cluster</name>
        <dbReference type="ChEBI" id="CHEBI:49883"/>
        <label>1</label>
    </ligand>
</feature>
<feature type="binding site" evidence="5">
    <location>
        <position position="99"/>
    </location>
    <ligand>
        <name>[4Fe-4S] cluster</name>
        <dbReference type="ChEBI" id="CHEBI:49883"/>
        <label>1</label>
    </ligand>
</feature>
<feature type="binding site" evidence="5">
    <location>
        <position position="102"/>
    </location>
    <ligand>
        <name>[4Fe-4S] cluster</name>
        <dbReference type="ChEBI" id="CHEBI:49883"/>
        <label>1</label>
    </ligand>
</feature>
<feature type="binding site" evidence="5">
    <location>
        <position position="109"/>
    </location>
    <ligand>
        <name>[4Fe-4S] cluster</name>
        <dbReference type="ChEBI" id="CHEBI:49883"/>
        <label>1</label>
    </ligand>
</feature>
<feature type="binding site" evidence="1">
    <location>
        <position position="147"/>
    </location>
    <ligand>
        <name>[4Fe-4S] cluster</name>
        <dbReference type="ChEBI" id="CHEBI:49883"/>
        <label>2</label>
    </ligand>
</feature>
<feature type="binding site" evidence="1">
    <location>
        <position position="150"/>
    </location>
    <ligand>
        <name>[4Fe-4S] cluster</name>
        <dbReference type="ChEBI" id="CHEBI:49883"/>
        <label>2</label>
    </ligand>
</feature>
<feature type="binding site" evidence="1">
    <location>
        <position position="153"/>
    </location>
    <ligand>
        <name>[4Fe-4S] cluster</name>
        <dbReference type="ChEBI" id="CHEBI:49883"/>
        <label>2</label>
    </ligand>
</feature>
<feature type="binding site" evidence="1">
    <location>
        <position position="157"/>
    </location>
    <ligand>
        <name>[4Fe-4S] cluster</name>
        <dbReference type="ChEBI" id="CHEBI:49883"/>
        <label>3</label>
    </ligand>
</feature>
<feature type="binding site" evidence="1">
    <location>
        <position position="190"/>
    </location>
    <ligand>
        <name>[4Fe-4S] cluster</name>
        <dbReference type="ChEBI" id="CHEBI:49883"/>
        <label>3</label>
    </ligand>
</feature>
<feature type="binding site" evidence="1">
    <location>
        <position position="193"/>
    </location>
    <ligand>
        <name>[4Fe-4S] cluster</name>
        <dbReference type="ChEBI" id="CHEBI:49883"/>
        <label>3</label>
    </ligand>
</feature>
<feature type="binding site" evidence="1">
    <location>
        <position position="196"/>
    </location>
    <ligand>
        <name>[4Fe-4S] cluster</name>
        <dbReference type="ChEBI" id="CHEBI:49883"/>
        <label>3</label>
    </ligand>
</feature>
<feature type="binding site" evidence="1">
    <location>
        <position position="200"/>
    </location>
    <ligand>
        <name>[4Fe-4S] cluster</name>
        <dbReference type="ChEBI" id="CHEBI:49883"/>
        <label>2</label>
    </ligand>
</feature>
<feature type="binding site" evidence="1">
    <location>
        <position position="264"/>
    </location>
    <ligand>
        <name>[4Fe-4S] cluster</name>
        <dbReference type="ChEBI" id="CHEBI:49883"/>
        <label>4</label>
    </ligand>
</feature>
<feature type="binding site" evidence="1">
    <location>
        <position position="267"/>
    </location>
    <ligand>
        <name>[4Fe-4S] cluster</name>
        <dbReference type="ChEBI" id="CHEBI:49883"/>
        <label>4</label>
    </ligand>
</feature>
<feature type="binding site" evidence="1">
    <location>
        <position position="271"/>
    </location>
    <ligand>
        <name>[4Fe-4S] cluster</name>
        <dbReference type="ChEBI" id="CHEBI:49883"/>
        <label>4</label>
    </ligand>
</feature>
<feature type="binding site" evidence="1">
    <location>
        <position position="299"/>
    </location>
    <ligand>
        <name>[4Fe-4S] cluster</name>
        <dbReference type="ChEBI" id="CHEBI:49883"/>
        <label>4</label>
    </ligand>
</feature>
<gene>
    <name type="ordered locus">SAUSA300_2258</name>
</gene>
<evidence type="ECO:0000250" key="1"/>
<evidence type="ECO:0000255" key="2">
    <source>
        <dbReference type="PROSITE-ProRule" id="PRU00465"/>
    </source>
</evidence>
<evidence type="ECO:0000255" key="3">
    <source>
        <dbReference type="PROSITE-ProRule" id="PRU00711"/>
    </source>
</evidence>
<evidence type="ECO:0000255" key="4">
    <source>
        <dbReference type="PROSITE-ProRule" id="PRU01004"/>
    </source>
</evidence>
<evidence type="ECO:0000255" key="5">
    <source>
        <dbReference type="PROSITE-ProRule" id="PRU01184"/>
    </source>
</evidence>
<evidence type="ECO:0000305" key="6"/>
<keyword id="KW-0001">2Fe-2S</keyword>
<keyword id="KW-0004">4Fe-4S</keyword>
<keyword id="KW-0408">Iron</keyword>
<keyword id="KW-0411">Iron-sulfur</keyword>
<keyword id="KW-0479">Metal-binding</keyword>
<keyword id="KW-0500">Molybdenum</keyword>
<keyword id="KW-0520">NAD</keyword>
<keyword id="KW-0560">Oxidoreductase</keyword>
<keyword id="KW-0677">Repeat</keyword>
<name>FDHL_STAA3</name>
<sequence length="984" mass="111244">MQEHLVVTLDGKDYLVEPGTNLLEFIKSQDTFVPSICYNESMGPIQTCDTCTVEIDGKIERSCSTVIDRPMTVNTVNNDVKDAQKEALDRILEKHMLYCTVCDYNNGDCEIHNTMDAWGLQHQTYEYKEKPYEKDYGPFYRYDPNQCILCGRCVEACQDIEVNETIRIDWDREHPRVIWDNDVPINESSCVSCGQCATVCPCNAMMEVNMEGNAGYMTDTEPGSLAAMIDLTKKAEPGYGPLFAISDSEAEMRKERIKKTKTVCTYCGVGCSFEVWTKDREILKVQPSHDSPANKIATCVKGKFSWGHINSDQRLTKPLVRKNGEFHEVEWDEALNVIADNFTAIKEKHGPDALSFISSSKATNEESYLMQKLARQVIGTNNVDNCSRYCQAPATKGLFRTVGHGGDSGSIEDLEKAAMSVLIGTNTAEAHPVIASRMKRAQKLFGQKIHVFDIRKHEMAERADRFYQPKPGTDLAWLSAVTKYIIDHDLHDKAFIDEWVDDFDEYYKSLETFTMAFAEEATGIPESELIKFAEECAKAESVVICWAMGITQQDIGSDSSTAISNLLLVTGNYRRPGTGAYPLRGHNNVQGCSDMGSMPDKITGYQSIEADDIRAKFEKEYGVKLNPKAGKDNHEMVEGIHDGEVHSLYLYGEDTGIVDSNINFVQAAFEKLDFMVVQDEFLTFTATYADVVLPASPSLEKDGTFTNTERRIQRLYQALEPLGDSKPDWKIFQAIANRLGFDWNYKHPSEIMDEVARLTPLYAGVSYDRLEGFNSLQWPVQPDGTDEPILYLEGFNFDNGKAKLFPLSFDNYFKQDEIYDIHVNNGRLLEHFHEGNMTYQTPMIKYKVPRAFVEISPELAEDRGIHEGAEVKLISETGEAVLQVHVTDRVKGKEIYIPLNNDAMENGDLGAINLLTNSDVDQYTDTPSYKRTSCRLEVITKRGKSPLNPNNFRVNKKRQPQYSVQVQKKWERSDYVFPGNQVDK</sequence>
<organism>
    <name type="scientific">Staphylococcus aureus (strain USA300)</name>
    <dbReference type="NCBI Taxonomy" id="367830"/>
    <lineage>
        <taxon>Bacteria</taxon>
        <taxon>Bacillati</taxon>
        <taxon>Bacillota</taxon>
        <taxon>Bacilli</taxon>
        <taxon>Bacillales</taxon>
        <taxon>Staphylococcaceae</taxon>
        <taxon>Staphylococcus</taxon>
    </lineage>
</organism>
<dbReference type="EC" id="1.17.1.9"/>
<dbReference type="EMBL" id="CP000255">
    <property type="protein sequence ID" value="ABD21959.1"/>
    <property type="molecule type" value="Genomic_DNA"/>
</dbReference>
<dbReference type="SMR" id="Q2FEI5"/>
<dbReference type="KEGG" id="saa:SAUSA300_2258"/>
<dbReference type="HOGENOM" id="CLU_000422_2_1_9"/>
<dbReference type="OMA" id="DGPPCCY"/>
<dbReference type="Proteomes" id="UP000001939">
    <property type="component" value="Chromosome"/>
</dbReference>
<dbReference type="GO" id="GO:0016020">
    <property type="term" value="C:membrane"/>
    <property type="evidence" value="ECO:0007669"/>
    <property type="project" value="TreeGrafter"/>
</dbReference>
<dbReference type="GO" id="GO:0051537">
    <property type="term" value="F:2 iron, 2 sulfur cluster binding"/>
    <property type="evidence" value="ECO:0007669"/>
    <property type="project" value="UniProtKB-KW"/>
</dbReference>
<dbReference type="GO" id="GO:0051539">
    <property type="term" value="F:4 iron, 4 sulfur cluster binding"/>
    <property type="evidence" value="ECO:0007669"/>
    <property type="project" value="UniProtKB-KW"/>
</dbReference>
<dbReference type="GO" id="GO:0008863">
    <property type="term" value="F:formate dehydrogenase (NAD+) activity"/>
    <property type="evidence" value="ECO:0007669"/>
    <property type="project" value="UniProtKB-EC"/>
</dbReference>
<dbReference type="GO" id="GO:0046872">
    <property type="term" value="F:metal ion binding"/>
    <property type="evidence" value="ECO:0007669"/>
    <property type="project" value="UniProtKB-KW"/>
</dbReference>
<dbReference type="GO" id="GO:0043546">
    <property type="term" value="F:molybdopterin cofactor binding"/>
    <property type="evidence" value="ECO:0007669"/>
    <property type="project" value="InterPro"/>
</dbReference>
<dbReference type="GO" id="GO:0003954">
    <property type="term" value="F:NADH dehydrogenase activity"/>
    <property type="evidence" value="ECO:0007669"/>
    <property type="project" value="TreeGrafter"/>
</dbReference>
<dbReference type="GO" id="GO:0015942">
    <property type="term" value="P:formate metabolic process"/>
    <property type="evidence" value="ECO:0007669"/>
    <property type="project" value="InterPro"/>
</dbReference>
<dbReference type="GO" id="GO:0022904">
    <property type="term" value="P:respiratory electron transport chain"/>
    <property type="evidence" value="ECO:0007669"/>
    <property type="project" value="TreeGrafter"/>
</dbReference>
<dbReference type="CDD" id="cd00207">
    <property type="entry name" value="fer2"/>
    <property type="match status" value="1"/>
</dbReference>
<dbReference type="CDD" id="cd02792">
    <property type="entry name" value="MopB_CT_Formate-Dh-Na-like"/>
    <property type="match status" value="1"/>
</dbReference>
<dbReference type="CDD" id="cd02753">
    <property type="entry name" value="MopB_Formate-Dh-H"/>
    <property type="match status" value="1"/>
</dbReference>
<dbReference type="FunFam" id="2.20.25.90:FF:000001">
    <property type="entry name" value="Formate dehydrogenase subunit alpha"/>
    <property type="match status" value="1"/>
</dbReference>
<dbReference type="FunFam" id="3.10.20.740:FF:000003">
    <property type="entry name" value="Formate dehydrogenase subunit alpha"/>
    <property type="match status" value="1"/>
</dbReference>
<dbReference type="FunFam" id="3.40.228.10:FF:000002">
    <property type="entry name" value="Formate dehydrogenase subunit alpha"/>
    <property type="match status" value="1"/>
</dbReference>
<dbReference type="FunFam" id="3.30.70.20:FF:000032">
    <property type="entry name" value="Formate dehydrogenase, alpha subunit"/>
    <property type="match status" value="1"/>
</dbReference>
<dbReference type="FunFam" id="2.40.40.20:FF:000005">
    <property type="entry name" value="Periplasmic nitrate reductase"/>
    <property type="match status" value="1"/>
</dbReference>
<dbReference type="Gene3D" id="2.40.40.20">
    <property type="match status" value="1"/>
</dbReference>
<dbReference type="Gene3D" id="3.10.20.740">
    <property type="match status" value="1"/>
</dbReference>
<dbReference type="Gene3D" id="3.30.70.20">
    <property type="match status" value="1"/>
</dbReference>
<dbReference type="Gene3D" id="3.40.50.740">
    <property type="match status" value="1"/>
</dbReference>
<dbReference type="Gene3D" id="2.20.25.90">
    <property type="entry name" value="ADC-like domains"/>
    <property type="match status" value="1"/>
</dbReference>
<dbReference type="Gene3D" id="3.40.228.10">
    <property type="entry name" value="Dimethylsulfoxide Reductase, domain 2"/>
    <property type="match status" value="1"/>
</dbReference>
<dbReference type="InterPro" id="IPR036010">
    <property type="entry name" value="2Fe-2S_ferredoxin-like_sf"/>
</dbReference>
<dbReference type="InterPro" id="IPR001041">
    <property type="entry name" value="2Fe-2S_ferredoxin-type"/>
</dbReference>
<dbReference type="InterPro" id="IPR017896">
    <property type="entry name" value="4Fe4S_Fe-S-bd"/>
</dbReference>
<dbReference type="InterPro" id="IPR017900">
    <property type="entry name" value="4Fe4S_Fe_S_CS"/>
</dbReference>
<dbReference type="InterPro" id="IPR009010">
    <property type="entry name" value="Asp_de-COase-like_dom_sf"/>
</dbReference>
<dbReference type="InterPro" id="IPR041924">
    <property type="entry name" value="Formate_Dh-H_N"/>
</dbReference>
<dbReference type="InterPro" id="IPR006478">
    <property type="entry name" value="Formate_DH_asu"/>
</dbReference>
<dbReference type="InterPro" id="IPR006657">
    <property type="entry name" value="MoPterin_dinucl-bd_dom"/>
</dbReference>
<dbReference type="InterPro" id="IPR006656">
    <property type="entry name" value="Mopterin_OxRdtase"/>
</dbReference>
<dbReference type="InterPro" id="IPR006963">
    <property type="entry name" value="Mopterin_OxRdtase_4Fe-4S_dom"/>
</dbReference>
<dbReference type="InterPro" id="IPR006655">
    <property type="entry name" value="Mopterin_OxRdtase_prok_CS"/>
</dbReference>
<dbReference type="InterPro" id="IPR027467">
    <property type="entry name" value="MopterinOxRdtase_cofactor_BS"/>
</dbReference>
<dbReference type="InterPro" id="IPR019574">
    <property type="entry name" value="NADH_UbQ_OxRdtase_Gsu_4Fe4S-bd"/>
</dbReference>
<dbReference type="InterPro" id="IPR050123">
    <property type="entry name" value="Prok_molybdopt-oxidoreductase"/>
</dbReference>
<dbReference type="NCBIfam" id="TIGR01591">
    <property type="entry name" value="Fdh-alpha"/>
    <property type="match status" value="1"/>
</dbReference>
<dbReference type="PANTHER" id="PTHR43105:SF14">
    <property type="entry name" value="FORMATE DEHYDROGENASE H"/>
    <property type="match status" value="1"/>
</dbReference>
<dbReference type="PANTHER" id="PTHR43105">
    <property type="entry name" value="RESPIRATORY NITRATE REDUCTASE"/>
    <property type="match status" value="1"/>
</dbReference>
<dbReference type="Pfam" id="PF13510">
    <property type="entry name" value="Fer2_4"/>
    <property type="match status" value="1"/>
</dbReference>
<dbReference type="Pfam" id="PF12838">
    <property type="entry name" value="Fer4_7"/>
    <property type="match status" value="1"/>
</dbReference>
<dbReference type="Pfam" id="PF04879">
    <property type="entry name" value="Molybdop_Fe4S4"/>
    <property type="match status" value="1"/>
</dbReference>
<dbReference type="Pfam" id="PF00384">
    <property type="entry name" value="Molybdopterin"/>
    <property type="match status" value="1"/>
</dbReference>
<dbReference type="Pfam" id="PF01568">
    <property type="entry name" value="Molydop_binding"/>
    <property type="match status" value="1"/>
</dbReference>
<dbReference type="Pfam" id="PF10588">
    <property type="entry name" value="NADH-G_4Fe-4S_3"/>
    <property type="match status" value="1"/>
</dbReference>
<dbReference type="PIRSF" id="PIRSF036643">
    <property type="entry name" value="FDH_alpha"/>
    <property type="match status" value="1"/>
</dbReference>
<dbReference type="SMART" id="SM00926">
    <property type="entry name" value="Molybdop_Fe4S4"/>
    <property type="match status" value="1"/>
</dbReference>
<dbReference type="SMART" id="SM00929">
    <property type="entry name" value="NADH-G_4Fe-4S_3"/>
    <property type="match status" value="1"/>
</dbReference>
<dbReference type="SUPFAM" id="SSF54292">
    <property type="entry name" value="2Fe-2S ferredoxin-like"/>
    <property type="match status" value="1"/>
</dbReference>
<dbReference type="SUPFAM" id="SSF54862">
    <property type="entry name" value="4Fe-4S ferredoxins"/>
    <property type="match status" value="1"/>
</dbReference>
<dbReference type="SUPFAM" id="SSF50692">
    <property type="entry name" value="ADC-like"/>
    <property type="match status" value="1"/>
</dbReference>
<dbReference type="SUPFAM" id="SSF53706">
    <property type="entry name" value="Formate dehydrogenase/DMSO reductase, domains 1-3"/>
    <property type="match status" value="1"/>
</dbReference>
<dbReference type="PROSITE" id="PS51085">
    <property type="entry name" value="2FE2S_FER_2"/>
    <property type="match status" value="1"/>
</dbReference>
<dbReference type="PROSITE" id="PS00198">
    <property type="entry name" value="4FE4S_FER_1"/>
    <property type="match status" value="1"/>
</dbReference>
<dbReference type="PROSITE" id="PS51379">
    <property type="entry name" value="4FE4S_FER_2"/>
    <property type="match status" value="2"/>
</dbReference>
<dbReference type="PROSITE" id="PS51839">
    <property type="entry name" value="4FE4S_HC3"/>
    <property type="match status" value="1"/>
</dbReference>
<dbReference type="PROSITE" id="PS51669">
    <property type="entry name" value="4FE4S_MOW_BIS_MGD"/>
    <property type="match status" value="1"/>
</dbReference>
<dbReference type="PROSITE" id="PS00551">
    <property type="entry name" value="MOLYBDOPTERIN_PROK_1"/>
    <property type="match status" value="1"/>
</dbReference>
<dbReference type="PROSITE" id="PS00932">
    <property type="entry name" value="MOLYBDOPTERIN_PROK_3"/>
    <property type="match status" value="1"/>
</dbReference>
<accession>Q2FEI5</accession>
<protein>
    <recommendedName>
        <fullName>Putative formate dehydrogenase SAUSA300_2258</fullName>
        <ecNumber>1.17.1.9</ecNumber>
    </recommendedName>
</protein>
<comment type="catalytic activity">
    <reaction>
        <text>formate + NAD(+) = CO2 + NADH</text>
        <dbReference type="Rhea" id="RHEA:15985"/>
        <dbReference type="ChEBI" id="CHEBI:15740"/>
        <dbReference type="ChEBI" id="CHEBI:16526"/>
        <dbReference type="ChEBI" id="CHEBI:57540"/>
        <dbReference type="ChEBI" id="CHEBI:57945"/>
        <dbReference type="EC" id="1.17.1.9"/>
    </reaction>
</comment>
<comment type="cofactor">
    <cofactor evidence="1">
        <name>[2Fe-2S] cluster</name>
        <dbReference type="ChEBI" id="CHEBI:190135"/>
    </cofactor>
    <text evidence="1">Binds 1 [2Fe-2S] cluster.</text>
</comment>
<comment type="cofactor">
    <cofactor evidence="1">
        <name>[4Fe-4S] cluster</name>
        <dbReference type="ChEBI" id="CHEBI:49883"/>
    </cofactor>
    <text evidence="1">Binds 4 [4Fe-4S] clusters.</text>
</comment>
<comment type="cofactor">
    <cofactor evidence="1">
        <name>Mo-bis(molybdopterin guanine dinucleotide)</name>
        <dbReference type="ChEBI" id="CHEBI:60539"/>
    </cofactor>
    <text evidence="1">Binds 1 molybdenum-bis(molybdopterin guanine dinucleotide) (Mo-bis-MGD) cofactor per subunit.</text>
</comment>
<comment type="similarity">
    <text evidence="6">In the C-terminal section; belongs to the prokaryotic molybdopterin-containing oxidoreductase family.</text>
</comment>